<keyword id="KW-0066">ATP synthesis</keyword>
<keyword id="KW-1003">Cell membrane</keyword>
<keyword id="KW-0139">CF(1)</keyword>
<keyword id="KW-0375">Hydrogen ion transport</keyword>
<keyword id="KW-0406">Ion transport</keyword>
<keyword id="KW-0472">Membrane</keyword>
<keyword id="KW-1185">Reference proteome</keyword>
<keyword id="KW-0813">Transport</keyword>
<accession>Q8FQ21</accession>
<comment type="function">
    <text evidence="1">Produces ATP from ADP in the presence of a proton gradient across the membrane. The gamma chain is believed to be important in regulating ATPase activity and the flow of protons through the CF(0) complex.</text>
</comment>
<comment type="subunit">
    <text evidence="1">F-type ATPases have 2 components, CF(1) - the catalytic core - and CF(0) - the membrane proton channel. CF(1) has five subunits: alpha(3), beta(3), gamma(1), delta(1), epsilon(1). CF(0) has three main subunits: a, b and c.</text>
</comment>
<comment type="subcellular location">
    <subcellularLocation>
        <location evidence="1">Cell membrane</location>
        <topology evidence="1">Peripheral membrane protein</topology>
    </subcellularLocation>
</comment>
<comment type="similarity">
    <text evidence="1">Belongs to the ATPase gamma chain family.</text>
</comment>
<gene>
    <name evidence="1" type="primary">atpG</name>
    <name type="ordered locus">CE1314</name>
</gene>
<dbReference type="EMBL" id="BA000035">
    <property type="protein sequence ID" value="BAC18124.1"/>
    <property type="molecule type" value="Genomic_DNA"/>
</dbReference>
<dbReference type="RefSeq" id="WP_006769275.1">
    <property type="nucleotide sequence ID" value="NC_004369.1"/>
</dbReference>
<dbReference type="SMR" id="Q8FQ21"/>
<dbReference type="STRING" id="196164.gene:10741723"/>
<dbReference type="KEGG" id="cef:CE1314"/>
<dbReference type="eggNOG" id="COG0224">
    <property type="taxonomic scope" value="Bacteria"/>
</dbReference>
<dbReference type="HOGENOM" id="CLU_050669_0_0_11"/>
<dbReference type="OrthoDB" id="9812769at2"/>
<dbReference type="Proteomes" id="UP000001409">
    <property type="component" value="Chromosome"/>
</dbReference>
<dbReference type="GO" id="GO:0005886">
    <property type="term" value="C:plasma membrane"/>
    <property type="evidence" value="ECO:0007669"/>
    <property type="project" value="UniProtKB-SubCell"/>
</dbReference>
<dbReference type="GO" id="GO:0045259">
    <property type="term" value="C:proton-transporting ATP synthase complex"/>
    <property type="evidence" value="ECO:0007669"/>
    <property type="project" value="UniProtKB-KW"/>
</dbReference>
<dbReference type="GO" id="GO:0005524">
    <property type="term" value="F:ATP binding"/>
    <property type="evidence" value="ECO:0007669"/>
    <property type="project" value="UniProtKB-UniRule"/>
</dbReference>
<dbReference type="GO" id="GO:0046933">
    <property type="term" value="F:proton-transporting ATP synthase activity, rotational mechanism"/>
    <property type="evidence" value="ECO:0007669"/>
    <property type="project" value="UniProtKB-UniRule"/>
</dbReference>
<dbReference type="GO" id="GO:0042777">
    <property type="term" value="P:proton motive force-driven plasma membrane ATP synthesis"/>
    <property type="evidence" value="ECO:0007669"/>
    <property type="project" value="UniProtKB-UniRule"/>
</dbReference>
<dbReference type="CDD" id="cd12151">
    <property type="entry name" value="F1-ATPase_gamma"/>
    <property type="match status" value="1"/>
</dbReference>
<dbReference type="Gene3D" id="3.40.1380.10">
    <property type="match status" value="1"/>
</dbReference>
<dbReference type="Gene3D" id="1.10.287.80">
    <property type="entry name" value="ATP synthase, gamma subunit, helix hairpin domain"/>
    <property type="match status" value="2"/>
</dbReference>
<dbReference type="HAMAP" id="MF_00815">
    <property type="entry name" value="ATP_synth_gamma_bact"/>
    <property type="match status" value="1"/>
</dbReference>
<dbReference type="InterPro" id="IPR035968">
    <property type="entry name" value="ATP_synth_F1_ATPase_gsu"/>
</dbReference>
<dbReference type="InterPro" id="IPR000131">
    <property type="entry name" value="ATP_synth_F1_gsu"/>
</dbReference>
<dbReference type="InterPro" id="IPR023632">
    <property type="entry name" value="ATP_synth_F1_gsu_CS"/>
</dbReference>
<dbReference type="NCBIfam" id="TIGR01146">
    <property type="entry name" value="ATPsyn_F1gamma"/>
    <property type="match status" value="1"/>
</dbReference>
<dbReference type="NCBIfam" id="NF004145">
    <property type="entry name" value="PRK05621.1-2"/>
    <property type="match status" value="1"/>
</dbReference>
<dbReference type="PANTHER" id="PTHR11693">
    <property type="entry name" value="ATP SYNTHASE GAMMA CHAIN"/>
    <property type="match status" value="1"/>
</dbReference>
<dbReference type="PANTHER" id="PTHR11693:SF22">
    <property type="entry name" value="ATP SYNTHASE SUBUNIT GAMMA, MITOCHONDRIAL"/>
    <property type="match status" value="1"/>
</dbReference>
<dbReference type="Pfam" id="PF00231">
    <property type="entry name" value="ATP-synt"/>
    <property type="match status" value="1"/>
</dbReference>
<dbReference type="PRINTS" id="PR00126">
    <property type="entry name" value="ATPASEGAMMA"/>
</dbReference>
<dbReference type="SUPFAM" id="SSF52943">
    <property type="entry name" value="ATP synthase (F1-ATPase), gamma subunit"/>
    <property type="match status" value="1"/>
</dbReference>
<dbReference type="PROSITE" id="PS00153">
    <property type="entry name" value="ATPASE_GAMMA"/>
    <property type="match status" value="1"/>
</dbReference>
<protein>
    <recommendedName>
        <fullName evidence="1">ATP synthase gamma chain</fullName>
    </recommendedName>
    <alternativeName>
        <fullName evidence="1">ATP synthase F1 sector gamma subunit</fullName>
    </alternativeName>
    <alternativeName>
        <fullName evidence="1">F-ATPase gamma subunit</fullName>
    </alternativeName>
</protein>
<sequence length="326" mass="35838">MANLRELRDRIRSVNSTKKITKAQELIATSRITKAQGRVAAAAPYAEEIQKVLERLASASSLDHPMLREREGGKRAAVLVVSSDRGMAGGYNHNVFKKAAELEKLLAEQGYEVVRYVTGSKGVGYYKFREDYVAGAWTGFSQDPDWNATHDVRRHLIDGFTATSDGTAKWRDGLNVAEGQEIQGFDQVHVVYTEFVSMLTQKPVVHQLLPVEPVIEDDIFERGESALSDGKNEIEPDYEFEPDADTLLEALLPQYISRRLFSIFLEAAAAESASRRNAMKSATDNATELVKDLSRVANAARQAQITQEITEIVGGAGALSGSGESD</sequence>
<name>ATPG_COREF</name>
<feature type="chain" id="PRO_0000073271" description="ATP synthase gamma chain">
    <location>
        <begin position="1"/>
        <end position="326"/>
    </location>
</feature>
<proteinExistence type="inferred from homology"/>
<reference key="1">
    <citation type="journal article" date="2003" name="Genome Res.">
        <title>Comparative complete genome sequence analysis of the amino acid replacements responsible for the thermostability of Corynebacterium efficiens.</title>
        <authorList>
            <person name="Nishio Y."/>
            <person name="Nakamura Y."/>
            <person name="Kawarabayasi Y."/>
            <person name="Usuda Y."/>
            <person name="Kimura E."/>
            <person name="Sugimoto S."/>
            <person name="Matsui K."/>
            <person name="Yamagishi A."/>
            <person name="Kikuchi H."/>
            <person name="Ikeo K."/>
            <person name="Gojobori T."/>
        </authorList>
    </citation>
    <scope>NUCLEOTIDE SEQUENCE [LARGE SCALE GENOMIC DNA]</scope>
    <source>
        <strain>DSM 44549 / YS-314 / AJ 12310 / JCM 11189 / NBRC 100395</strain>
    </source>
</reference>
<organism>
    <name type="scientific">Corynebacterium efficiens (strain DSM 44549 / YS-314 / AJ 12310 / JCM 11189 / NBRC 100395)</name>
    <dbReference type="NCBI Taxonomy" id="196164"/>
    <lineage>
        <taxon>Bacteria</taxon>
        <taxon>Bacillati</taxon>
        <taxon>Actinomycetota</taxon>
        <taxon>Actinomycetes</taxon>
        <taxon>Mycobacteriales</taxon>
        <taxon>Corynebacteriaceae</taxon>
        <taxon>Corynebacterium</taxon>
    </lineage>
</organism>
<evidence type="ECO:0000255" key="1">
    <source>
        <dbReference type="HAMAP-Rule" id="MF_00815"/>
    </source>
</evidence>